<protein>
    <recommendedName>
        <fullName evidence="1">Phosphoglycerate kinase</fullName>
        <ecNumber evidence="1">2.7.2.3</ecNumber>
    </recommendedName>
</protein>
<feature type="chain" id="PRO_0000146047" description="Phosphoglycerate kinase">
    <location>
        <begin position="1"/>
        <end position="387"/>
    </location>
</feature>
<feature type="binding site" evidence="1">
    <location>
        <begin position="21"/>
        <end position="23"/>
    </location>
    <ligand>
        <name>substrate</name>
    </ligand>
</feature>
<feature type="binding site" evidence="1">
    <location>
        <position position="36"/>
    </location>
    <ligand>
        <name>substrate</name>
    </ligand>
</feature>
<feature type="binding site" evidence="1">
    <location>
        <begin position="59"/>
        <end position="62"/>
    </location>
    <ligand>
        <name>substrate</name>
    </ligand>
</feature>
<feature type="binding site" evidence="1">
    <location>
        <position position="113"/>
    </location>
    <ligand>
        <name>substrate</name>
    </ligand>
</feature>
<feature type="binding site" evidence="1">
    <location>
        <position position="146"/>
    </location>
    <ligand>
        <name>substrate</name>
    </ligand>
</feature>
<feature type="binding site" evidence="1">
    <location>
        <position position="197"/>
    </location>
    <ligand>
        <name>ATP</name>
        <dbReference type="ChEBI" id="CHEBI:30616"/>
    </ligand>
</feature>
<feature type="binding site" evidence="1">
    <location>
        <position position="314"/>
    </location>
    <ligand>
        <name>ATP</name>
        <dbReference type="ChEBI" id="CHEBI:30616"/>
    </ligand>
</feature>
<feature type="binding site" evidence="1">
    <location>
        <begin position="340"/>
        <end position="343"/>
    </location>
    <ligand>
        <name>ATP</name>
        <dbReference type="ChEBI" id="CHEBI:30616"/>
    </ligand>
</feature>
<name>PGK_YERPE</name>
<organism>
    <name type="scientific">Yersinia pestis</name>
    <dbReference type="NCBI Taxonomy" id="632"/>
    <lineage>
        <taxon>Bacteria</taxon>
        <taxon>Pseudomonadati</taxon>
        <taxon>Pseudomonadota</taxon>
        <taxon>Gammaproteobacteria</taxon>
        <taxon>Enterobacterales</taxon>
        <taxon>Yersiniaceae</taxon>
        <taxon>Yersinia</taxon>
    </lineage>
</organism>
<dbReference type="EC" id="2.7.2.3" evidence="1"/>
<dbReference type="EMBL" id="AL590842">
    <property type="protein sequence ID" value="CAL19588.1"/>
    <property type="molecule type" value="Genomic_DNA"/>
</dbReference>
<dbReference type="EMBL" id="AE009952">
    <property type="protein sequence ID" value="AAM86858.1"/>
    <property type="molecule type" value="Genomic_DNA"/>
</dbReference>
<dbReference type="EMBL" id="AE017042">
    <property type="protein sequence ID" value="AAS63673.1"/>
    <property type="molecule type" value="Genomic_DNA"/>
</dbReference>
<dbReference type="PIR" id="AB0113">
    <property type="entry name" value="AB0113"/>
</dbReference>
<dbReference type="RefSeq" id="WP_002209963.1">
    <property type="nucleotide sequence ID" value="NZ_WUCM01000038.1"/>
</dbReference>
<dbReference type="RefSeq" id="YP_002345969.1">
    <property type="nucleotide sequence ID" value="NC_003143.1"/>
</dbReference>
<dbReference type="SMR" id="Q8ZHH3"/>
<dbReference type="IntAct" id="Q8ZHH3">
    <property type="interactions" value="2"/>
</dbReference>
<dbReference type="STRING" id="214092.YPO0921"/>
<dbReference type="PaxDb" id="214092-YPO0921"/>
<dbReference type="EnsemblBacteria" id="AAS63673">
    <property type="protein sequence ID" value="AAS63673"/>
    <property type="gene ID" value="YP_3519"/>
</dbReference>
<dbReference type="GeneID" id="57973719"/>
<dbReference type="KEGG" id="ype:YPO0921"/>
<dbReference type="KEGG" id="ypk:y3308"/>
<dbReference type="KEGG" id="ypm:YP_3519"/>
<dbReference type="PATRIC" id="fig|214092.21.peg.1197"/>
<dbReference type="eggNOG" id="COG0126">
    <property type="taxonomic scope" value="Bacteria"/>
</dbReference>
<dbReference type="HOGENOM" id="CLU_025427_0_2_6"/>
<dbReference type="OMA" id="DMIFDIG"/>
<dbReference type="OrthoDB" id="9808460at2"/>
<dbReference type="UniPathway" id="UPA00109">
    <property type="reaction ID" value="UER00185"/>
</dbReference>
<dbReference type="Proteomes" id="UP000000815">
    <property type="component" value="Chromosome"/>
</dbReference>
<dbReference type="Proteomes" id="UP000001019">
    <property type="component" value="Chromosome"/>
</dbReference>
<dbReference type="Proteomes" id="UP000002490">
    <property type="component" value="Chromosome"/>
</dbReference>
<dbReference type="GO" id="GO:0005829">
    <property type="term" value="C:cytosol"/>
    <property type="evidence" value="ECO:0000318"/>
    <property type="project" value="GO_Central"/>
</dbReference>
<dbReference type="GO" id="GO:0043531">
    <property type="term" value="F:ADP binding"/>
    <property type="evidence" value="ECO:0000318"/>
    <property type="project" value="GO_Central"/>
</dbReference>
<dbReference type="GO" id="GO:0005524">
    <property type="term" value="F:ATP binding"/>
    <property type="evidence" value="ECO:0000318"/>
    <property type="project" value="GO_Central"/>
</dbReference>
<dbReference type="GO" id="GO:0004618">
    <property type="term" value="F:phosphoglycerate kinase activity"/>
    <property type="evidence" value="ECO:0000318"/>
    <property type="project" value="GO_Central"/>
</dbReference>
<dbReference type="GO" id="GO:0006094">
    <property type="term" value="P:gluconeogenesis"/>
    <property type="evidence" value="ECO:0000318"/>
    <property type="project" value="GO_Central"/>
</dbReference>
<dbReference type="GO" id="GO:0006096">
    <property type="term" value="P:glycolytic process"/>
    <property type="evidence" value="ECO:0000318"/>
    <property type="project" value="GO_Central"/>
</dbReference>
<dbReference type="FunFam" id="3.40.50.1260:FF:000001">
    <property type="entry name" value="Phosphoglycerate kinase"/>
    <property type="match status" value="1"/>
</dbReference>
<dbReference type="FunFam" id="3.40.50.1260:FF:000002">
    <property type="entry name" value="Phosphoglycerate kinase"/>
    <property type="match status" value="1"/>
</dbReference>
<dbReference type="Gene3D" id="3.40.50.1260">
    <property type="entry name" value="Phosphoglycerate kinase, N-terminal domain"/>
    <property type="match status" value="2"/>
</dbReference>
<dbReference type="HAMAP" id="MF_00145">
    <property type="entry name" value="Phosphoglyc_kinase"/>
    <property type="match status" value="1"/>
</dbReference>
<dbReference type="InterPro" id="IPR001576">
    <property type="entry name" value="Phosphoglycerate_kinase"/>
</dbReference>
<dbReference type="InterPro" id="IPR015911">
    <property type="entry name" value="Phosphoglycerate_kinase_CS"/>
</dbReference>
<dbReference type="InterPro" id="IPR015824">
    <property type="entry name" value="Phosphoglycerate_kinase_N"/>
</dbReference>
<dbReference type="InterPro" id="IPR036043">
    <property type="entry name" value="Phosphoglycerate_kinase_sf"/>
</dbReference>
<dbReference type="PANTHER" id="PTHR11406">
    <property type="entry name" value="PHOSPHOGLYCERATE KINASE"/>
    <property type="match status" value="1"/>
</dbReference>
<dbReference type="PANTHER" id="PTHR11406:SF23">
    <property type="entry name" value="PHOSPHOGLYCERATE KINASE 1, CHLOROPLASTIC-RELATED"/>
    <property type="match status" value="1"/>
</dbReference>
<dbReference type="Pfam" id="PF00162">
    <property type="entry name" value="PGK"/>
    <property type="match status" value="1"/>
</dbReference>
<dbReference type="PIRSF" id="PIRSF000724">
    <property type="entry name" value="Pgk"/>
    <property type="match status" value="1"/>
</dbReference>
<dbReference type="PRINTS" id="PR00477">
    <property type="entry name" value="PHGLYCKINASE"/>
</dbReference>
<dbReference type="SUPFAM" id="SSF53748">
    <property type="entry name" value="Phosphoglycerate kinase"/>
    <property type="match status" value="1"/>
</dbReference>
<dbReference type="PROSITE" id="PS00111">
    <property type="entry name" value="PGLYCERATE_KINASE"/>
    <property type="match status" value="1"/>
</dbReference>
<comment type="catalytic activity">
    <reaction evidence="1">
        <text>(2R)-3-phosphoglycerate + ATP = (2R)-3-phospho-glyceroyl phosphate + ADP</text>
        <dbReference type="Rhea" id="RHEA:14801"/>
        <dbReference type="ChEBI" id="CHEBI:30616"/>
        <dbReference type="ChEBI" id="CHEBI:57604"/>
        <dbReference type="ChEBI" id="CHEBI:58272"/>
        <dbReference type="ChEBI" id="CHEBI:456216"/>
        <dbReference type="EC" id="2.7.2.3"/>
    </reaction>
</comment>
<comment type="pathway">
    <text evidence="1">Carbohydrate degradation; glycolysis; pyruvate from D-glyceraldehyde 3-phosphate: step 2/5.</text>
</comment>
<comment type="subunit">
    <text evidence="1">Monomer.</text>
</comment>
<comment type="subcellular location">
    <subcellularLocation>
        <location evidence="1">Cytoplasm</location>
    </subcellularLocation>
</comment>
<comment type="similarity">
    <text evidence="1">Belongs to the phosphoglycerate kinase family.</text>
</comment>
<evidence type="ECO:0000255" key="1">
    <source>
        <dbReference type="HAMAP-Rule" id="MF_00145"/>
    </source>
</evidence>
<keyword id="KW-0067">ATP-binding</keyword>
<keyword id="KW-0963">Cytoplasm</keyword>
<keyword id="KW-0324">Glycolysis</keyword>
<keyword id="KW-0418">Kinase</keyword>
<keyword id="KW-0547">Nucleotide-binding</keyword>
<keyword id="KW-1185">Reference proteome</keyword>
<keyword id="KW-0808">Transferase</keyword>
<sequence>MSVIKMTDLDLAGKRVLIRADLNVPVKEGKVTSDARIRASLPTIEAALKQGAKVMVTSHLGRPTEGEYNEEFSLLPVVNYLKEKLSSPVRLAKDYLDGVEIAAGELVVLENVRFNKGEKKDDEALSKKYAALCDVYVMDAFGTAHRAQASTHGVGKFAPIACAGPLLSAELEALGKALGNPARPMVAIVGGSKVSTKLTVLGALSKIADKLIVGGGIANTFVAAQGHNVGKSLYEADLIPEAKRLLETCDIPVPTDVRVATEFSETAAATLKPANEIKDDEQILDLGDESAERLAEILKNAKTILWNGPVGVFEFPNFRKGTEIVARAIAESEAFSIAGGGDTLAAIDLFGIADQISYISTGGGAFLEFVEGKKLPAVVMLEERAKQ</sequence>
<reference key="1">
    <citation type="journal article" date="2001" name="Nature">
        <title>Genome sequence of Yersinia pestis, the causative agent of plague.</title>
        <authorList>
            <person name="Parkhill J."/>
            <person name="Wren B.W."/>
            <person name="Thomson N.R."/>
            <person name="Titball R.W."/>
            <person name="Holden M.T.G."/>
            <person name="Prentice M.B."/>
            <person name="Sebaihia M."/>
            <person name="James K.D."/>
            <person name="Churcher C.M."/>
            <person name="Mungall K.L."/>
            <person name="Baker S."/>
            <person name="Basham D."/>
            <person name="Bentley S.D."/>
            <person name="Brooks K."/>
            <person name="Cerdeno-Tarraga A.-M."/>
            <person name="Chillingworth T."/>
            <person name="Cronin A."/>
            <person name="Davies R.M."/>
            <person name="Davis P."/>
            <person name="Dougan G."/>
            <person name="Feltwell T."/>
            <person name="Hamlin N."/>
            <person name="Holroyd S."/>
            <person name="Jagels K."/>
            <person name="Karlyshev A.V."/>
            <person name="Leather S."/>
            <person name="Moule S."/>
            <person name="Oyston P.C.F."/>
            <person name="Quail M.A."/>
            <person name="Rutherford K.M."/>
            <person name="Simmonds M."/>
            <person name="Skelton J."/>
            <person name="Stevens K."/>
            <person name="Whitehead S."/>
            <person name="Barrell B.G."/>
        </authorList>
    </citation>
    <scope>NUCLEOTIDE SEQUENCE [LARGE SCALE GENOMIC DNA]</scope>
    <source>
        <strain>CO-92 / Biovar Orientalis</strain>
    </source>
</reference>
<reference key="2">
    <citation type="journal article" date="2002" name="J. Bacteriol.">
        <title>Genome sequence of Yersinia pestis KIM.</title>
        <authorList>
            <person name="Deng W."/>
            <person name="Burland V."/>
            <person name="Plunkett G. III"/>
            <person name="Boutin A."/>
            <person name="Mayhew G.F."/>
            <person name="Liss P."/>
            <person name="Perna N.T."/>
            <person name="Rose D.J."/>
            <person name="Mau B."/>
            <person name="Zhou S."/>
            <person name="Schwartz D.C."/>
            <person name="Fetherston J.D."/>
            <person name="Lindler L.E."/>
            <person name="Brubaker R.R."/>
            <person name="Plano G.V."/>
            <person name="Straley S.C."/>
            <person name="McDonough K.A."/>
            <person name="Nilles M.L."/>
            <person name="Matson J.S."/>
            <person name="Blattner F.R."/>
            <person name="Perry R.D."/>
        </authorList>
    </citation>
    <scope>NUCLEOTIDE SEQUENCE [LARGE SCALE GENOMIC DNA]</scope>
    <source>
        <strain>KIM10+ / Biovar Mediaevalis</strain>
    </source>
</reference>
<reference key="3">
    <citation type="journal article" date="2004" name="DNA Res.">
        <title>Complete genome sequence of Yersinia pestis strain 91001, an isolate avirulent to humans.</title>
        <authorList>
            <person name="Song Y."/>
            <person name="Tong Z."/>
            <person name="Wang J."/>
            <person name="Wang L."/>
            <person name="Guo Z."/>
            <person name="Han Y."/>
            <person name="Zhang J."/>
            <person name="Pei D."/>
            <person name="Zhou D."/>
            <person name="Qin H."/>
            <person name="Pang X."/>
            <person name="Han Y."/>
            <person name="Zhai J."/>
            <person name="Li M."/>
            <person name="Cui B."/>
            <person name="Qi Z."/>
            <person name="Jin L."/>
            <person name="Dai R."/>
            <person name="Chen F."/>
            <person name="Li S."/>
            <person name="Ye C."/>
            <person name="Du Z."/>
            <person name="Lin W."/>
            <person name="Wang J."/>
            <person name="Yu J."/>
            <person name="Yang H."/>
            <person name="Wang J."/>
            <person name="Huang P."/>
            <person name="Yang R."/>
        </authorList>
    </citation>
    <scope>NUCLEOTIDE SEQUENCE [LARGE SCALE GENOMIC DNA]</scope>
    <source>
        <strain>91001 / Biovar Mediaevalis</strain>
    </source>
</reference>
<gene>
    <name evidence="1" type="primary">pgk</name>
    <name type="ordered locus">YPO0921</name>
    <name type="ordered locus">y3308</name>
    <name type="ordered locus">YP_3519</name>
</gene>
<accession>Q8ZHH3</accession>
<accession>Q0WIB9</accession>
<proteinExistence type="inferred from homology"/>